<reference key="1">
    <citation type="submission" date="2006-08" db="EMBL/GenBank/DDBJ databases">
        <title>Positive selection in transcription factor genes on the human lineage.</title>
        <authorList>
            <person name="Nickel G.C."/>
            <person name="Tefft D.L."/>
            <person name="Trevarthen K."/>
            <person name="Funt J."/>
            <person name="Adams M.D."/>
        </authorList>
    </citation>
    <scope>NUCLEOTIDE SEQUENCE [GENOMIC DNA]</scope>
</reference>
<proteinExistence type="inferred from homology"/>
<evidence type="ECO:0000250" key="1"/>
<evidence type="ECO:0000250" key="2">
    <source>
        <dbReference type="UniProtKB" id="P09016"/>
    </source>
</evidence>
<evidence type="ECO:0000255" key="3">
    <source>
        <dbReference type="PROSITE-ProRule" id="PRU00108"/>
    </source>
</evidence>
<evidence type="ECO:0000256" key="4">
    <source>
        <dbReference type="SAM" id="MobiDB-lite"/>
    </source>
</evidence>
<evidence type="ECO:0000305" key="5"/>
<dbReference type="EMBL" id="DQ976964">
    <property type="protein sequence ID" value="ABM47600.1"/>
    <property type="molecule type" value="Genomic_DNA"/>
</dbReference>
<dbReference type="BMRB" id="A1YFD8"/>
<dbReference type="SMR" id="A1YFD8"/>
<dbReference type="GO" id="GO:0005654">
    <property type="term" value="C:nucleoplasm"/>
    <property type="evidence" value="ECO:0007669"/>
    <property type="project" value="TreeGrafter"/>
</dbReference>
<dbReference type="GO" id="GO:0000981">
    <property type="term" value="F:DNA-binding transcription factor activity, RNA polymerase II-specific"/>
    <property type="evidence" value="ECO:0007669"/>
    <property type="project" value="InterPro"/>
</dbReference>
<dbReference type="GO" id="GO:0000978">
    <property type="term" value="F:RNA polymerase II cis-regulatory region sequence-specific DNA binding"/>
    <property type="evidence" value="ECO:0007669"/>
    <property type="project" value="TreeGrafter"/>
</dbReference>
<dbReference type="GO" id="GO:0009952">
    <property type="term" value="P:anterior/posterior pattern specification"/>
    <property type="evidence" value="ECO:0007669"/>
    <property type="project" value="TreeGrafter"/>
</dbReference>
<dbReference type="GO" id="GO:0048704">
    <property type="term" value="P:embryonic skeletal system morphogenesis"/>
    <property type="evidence" value="ECO:0007669"/>
    <property type="project" value="TreeGrafter"/>
</dbReference>
<dbReference type="GO" id="GO:0045944">
    <property type="term" value="P:positive regulation of transcription by RNA polymerase II"/>
    <property type="evidence" value="ECO:0007669"/>
    <property type="project" value="TreeGrafter"/>
</dbReference>
<dbReference type="CDD" id="cd00086">
    <property type="entry name" value="homeodomain"/>
    <property type="match status" value="1"/>
</dbReference>
<dbReference type="FunFam" id="1.10.10.60:FF:000029">
    <property type="entry name" value="Homeobox protein Hox-D4"/>
    <property type="match status" value="1"/>
</dbReference>
<dbReference type="Gene3D" id="1.10.10.60">
    <property type="entry name" value="Homeodomain-like"/>
    <property type="match status" value="1"/>
</dbReference>
<dbReference type="InterPro" id="IPR050609">
    <property type="entry name" value="Antp_homeobox_Deformed_sf"/>
</dbReference>
<dbReference type="InterPro" id="IPR001356">
    <property type="entry name" value="HD"/>
</dbReference>
<dbReference type="InterPro" id="IPR020479">
    <property type="entry name" value="HD_metazoa"/>
</dbReference>
<dbReference type="InterPro" id="IPR017995">
    <property type="entry name" value="Homeobox_antennapedia"/>
</dbReference>
<dbReference type="InterPro" id="IPR001827">
    <property type="entry name" value="Homeobox_Antennapedia_CS"/>
</dbReference>
<dbReference type="InterPro" id="IPR017970">
    <property type="entry name" value="Homeobox_CS"/>
</dbReference>
<dbReference type="InterPro" id="IPR009057">
    <property type="entry name" value="Homeodomain-like_sf"/>
</dbReference>
<dbReference type="PANTHER" id="PTHR45771:SF5">
    <property type="entry name" value="HOMEOBOX PROTEIN HOX-D4"/>
    <property type="match status" value="1"/>
</dbReference>
<dbReference type="PANTHER" id="PTHR45771">
    <property type="entry name" value="HOMEOTIC PROTEIN DEFORMED"/>
    <property type="match status" value="1"/>
</dbReference>
<dbReference type="Pfam" id="PF00046">
    <property type="entry name" value="Homeodomain"/>
    <property type="match status" value="1"/>
</dbReference>
<dbReference type="PRINTS" id="PR00025">
    <property type="entry name" value="ANTENNAPEDIA"/>
</dbReference>
<dbReference type="PRINTS" id="PR00024">
    <property type="entry name" value="HOMEOBOX"/>
</dbReference>
<dbReference type="SMART" id="SM00389">
    <property type="entry name" value="HOX"/>
    <property type="match status" value="1"/>
</dbReference>
<dbReference type="SUPFAM" id="SSF46689">
    <property type="entry name" value="Homeodomain-like"/>
    <property type="match status" value="1"/>
</dbReference>
<dbReference type="PROSITE" id="PS00032">
    <property type="entry name" value="ANTENNAPEDIA"/>
    <property type="match status" value="1"/>
</dbReference>
<dbReference type="PROSITE" id="PS00027">
    <property type="entry name" value="HOMEOBOX_1"/>
    <property type="match status" value="1"/>
</dbReference>
<dbReference type="PROSITE" id="PS50071">
    <property type="entry name" value="HOMEOBOX_2"/>
    <property type="match status" value="1"/>
</dbReference>
<comment type="function">
    <text evidence="1">Sequence-specific transcription factor which is part of a developmental regulatory system that provides cells with specific positional identities on the anterior-posterior axis.</text>
</comment>
<comment type="subunit">
    <text evidence="2">Forms a DNA-binding heterodimer with transcription factor PBX1.</text>
</comment>
<comment type="subcellular location">
    <subcellularLocation>
        <location evidence="3">Nucleus</location>
    </subcellularLocation>
</comment>
<comment type="similarity">
    <text evidence="5">Belongs to the Antp homeobox family. Deformed subfamily.</text>
</comment>
<sequence>MVMSSYMVNSKYVDPKFPPCEEYLQGGYLGEQGAEYYGGGTQGADFQPPGLYPRPDFGEQPFGGGGPGTGSALPTRGHGQEPSGPGGHYAASGEPCPAPPAPPPAPLPGARACSQSDPKQPPPGTALKQPAVVYPWMKKVHVNSVNPNYTGGEPKRSRTAYTRQQVLELEKEFHFNRYLTRRRRIEIAHTLCLSERQIKIWFQNRRMKWKKDHKLPNTKGRSSSSSSSSSCSSSTAPSQHLQPMAKDHHTDLTTL</sequence>
<keyword id="KW-0217">Developmental protein</keyword>
<keyword id="KW-0238">DNA-binding</keyword>
<keyword id="KW-0371">Homeobox</keyword>
<keyword id="KW-0539">Nucleus</keyword>
<keyword id="KW-0804">Transcription</keyword>
<keyword id="KW-0805">Transcription regulation</keyword>
<feature type="chain" id="PRO_0000285437" description="Homeobox protein Hox-D4">
    <location>
        <begin position="1"/>
        <end position="255"/>
    </location>
</feature>
<feature type="DNA-binding region" description="Homeobox" evidence="3">
    <location>
        <begin position="154"/>
        <end position="213"/>
    </location>
</feature>
<feature type="region of interest" description="Disordered" evidence="4">
    <location>
        <begin position="31"/>
        <end position="128"/>
    </location>
</feature>
<feature type="region of interest" description="Disordered" evidence="4">
    <location>
        <begin position="212"/>
        <end position="255"/>
    </location>
</feature>
<feature type="short sequence motif" description="Antp-type hexapeptide">
    <location>
        <begin position="133"/>
        <end position="138"/>
    </location>
</feature>
<feature type="compositionally biased region" description="Pro residues" evidence="4">
    <location>
        <begin position="96"/>
        <end position="107"/>
    </location>
</feature>
<feature type="compositionally biased region" description="Low complexity" evidence="4">
    <location>
        <begin position="222"/>
        <end position="234"/>
    </location>
</feature>
<feature type="compositionally biased region" description="Basic and acidic residues" evidence="4">
    <location>
        <begin position="245"/>
        <end position="255"/>
    </location>
</feature>
<accession>A1YFD8</accession>
<name>HXD4_SAGLB</name>
<protein>
    <recommendedName>
        <fullName>Homeobox protein Hox-D4</fullName>
    </recommendedName>
</protein>
<organism>
    <name type="scientific">Saguinus labiatus</name>
    <name type="common">Red-chested mustached tamarin</name>
    <dbReference type="NCBI Taxonomy" id="78454"/>
    <lineage>
        <taxon>Eukaryota</taxon>
        <taxon>Metazoa</taxon>
        <taxon>Chordata</taxon>
        <taxon>Craniata</taxon>
        <taxon>Vertebrata</taxon>
        <taxon>Euteleostomi</taxon>
        <taxon>Mammalia</taxon>
        <taxon>Eutheria</taxon>
        <taxon>Euarchontoglires</taxon>
        <taxon>Primates</taxon>
        <taxon>Haplorrhini</taxon>
        <taxon>Platyrrhini</taxon>
        <taxon>Cebidae</taxon>
        <taxon>Callitrichinae</taxon>
        <taxon>Saguinus</taxon>
    </lineage>
</organism>
<gene>
    <name type="primary">HOXD4</name>
</gene>